<organism>
    <name type="scientific">Homo sapiens</name>
    <name type="common">Human</name>
    <dbReference type="NCBI Taxonomy" id="9606"/>
    <lineage>
        <taxon>Eukaryota</taxon>
        <taxon>Metazoa</taxon>
        <taxon>Chordata</taxon>
        <taxon>Craniata</taxon>
        <taxon>Vertebrata</taxon>
        <taxon>Euteleostomi</taxon>
        <taxon>Mammalia</taxon>
        <taxon>Eutheria</taxon>
        <taxon>Euarchontoglires</taxon>
        <taxon>Primates</taxon>
        <taxon>Haplorrhini</taxon>
        <taxon>Catarrhini</taxon>
        <taxon>Hominidae</taxon>
        <taxon>Homo</taxon>
    </lineage>
</organism>
<gene>
    <name type="primary">TNFRSF11B</name>
    <name type="synonym">OCIF</name>
    <name type="synonym">OPG</name>
</gene>
<protein>
    <recommendedName>
        <fullName>Tumor necrosis factor receptor superfamily member 11B</fullName>
    </recommendedName>
    <alternativeName>
        <fullName>Osteoclastogenesis inhibitory factor</fullName>
    </alternativeName>
    <alternativeName>
        <fullName>Osteoprotegerin</fullName>
    </alternativeName>
</protein>
<name>TR11B_HUMAN</name>
<dbReference type="EMBL" id="U94332">
    <property type="protein sequence ID" value="AAB53709.1"/>
    <property type="molecule type" value="mRNA"/>
</dbReference>
<dbReference type="EMBL" id="AB002146">
    <property type="protein sequence ID" value="BAA25910.1"/>
    <property type="molecule type" value="mRNA"/>
</dbReference>
<dbReference type="EMBL" id="AB008822">
    <property type="protein sequence ID" value="BAA32076.1"/>
    <property type="molecule type" value="Genomic_DNA"/>
</dbReference>
<dbReference type="EMBL" id="AK313710">
    <property type="protein sequence ID" value="BAG36455.1"/>
    <property type="molecule type" value="mRNA"/>
</dbReference>
<dbReference type="EMBL" id="AK223155">
    <property type="protein sequence ID" value="BAD96875.1"/>
    <property type="molecule type" value="mRNA"/>
</dbReference>
<dbReference type="EMBL" id="AY466112">
    <property type="protein sequence ID" value="AAR23265.1"/>
    <property type="molecule type" value="Genomic_DNA"/>
</dbReference>
<dbReference type="EMBL" id="AC107953">
    <property type="status" value="NOT_ANNOTATED_CDS"/>
    <property type="molecule type" value="Genomic_DNA"/>
</dbReference>
<dbReference type="EMBL" id="AP004283">
    <property type="status" value="NOT_ANNOTATED_CDS"/>
    <property type="molecule type" value="Genomic_DNA"/>
</dbReference>
<dbReference type="EMBL" id="BC030155">
    <property type="protein sequence ID" value="AAH30155.1"/>
    <property type="molecule type" value="mRNA"/>
</dbReference>
<dbReference type="EMBL" id="AF134187">
    <property type="protein sequence ID" value="AAF20168.1"/>
    <property type="molecule type" value="mRNA"/>
</dbReference>
<dbReference type="CCDS" id="CCDS6326.1"/>
<dbReference type="RefSeq" id="NP_002537.3">
    <property type="nucleotide sequence ID" value="NM_002546.3"/>
</dbReference>
<dbReference type="PDB" id="3URF">
    <property type="method" value="X-ray"/>
    <property type="resolution" value="2.70 A"/>
    <property type="chains" value="Z=22-186"/>
</dbReference>
<dbReference type="PDBsum" id="3URF"/>
<dbReference type="SMR" id="O00300"/>
<dbReference type="BioGRID" id="111028">
    <property type="interactions" value="6"/>
</dbReference>
<dbReference type="ComplexPortal" id="CPX-4663">
    <property type="entry name" value="Osteoprotegerin complex"/>
</dbReference>
<dbReference type="CORUM" id="O00300"/>
<dbReference type="FunCoup" id="O00300">
    <property type="interactions" value="425"/>
</dbReference>
<dbReference type="IntAct" id="O00300">
    <property type="interactions" value="6"/>
</dbReference>
<dbReference type="STRING" id="9606.ENSP00000297350"/>
<dbReference type="GlyConnect" id="2947">
    <property type="glycosylation" value="15 N-Linked glycans (2 sites)"/>
</dbReference>
<dbReference type="GlyCosmos" id="O00300">
    <property type="glycosylation" value="5 sites, 23 glycans"/>
</dbReference>
<dbReference type="GlyGen" id="O00300">
    <property type="glycosylation" value="7 sites, 29 N-linked glycans (3 sites), 1 O-linked glycan (1 site)"/>
</dbReference>
<dbReference type="iPTMnet" id="O00300"/>
<dbReference type="PhosphoSitePlus" id="O00300"/>
<dbReference type="BioMuta" id="TNFRSF11B"/>
<dbReference type="jPOST" id="O00300"/>
<dbReference type="MassIVE" id="O00300"/>
<dbReference type="PaxDb" id="9606-ENSP00000297350"/>
<dbReference type="PeptideAtlas" id="O00300"/>
<dbReference type="ProteomicsDB" id="47829"/>
<dbReference type="Antibodypedia" id="13632">
    <property type="antibodies" value="798 antibodies from 45 providers"/>
</dbReference>
<dbReference type="DNASU" id="4982"/>
<dbReference type="Ensembl" id="ENST00000297350.9">
    <property type="protein sequence ID" value="ENSP00000297350.4"/>
    <property type="gene ID" value="ENSG00000164761.9"/>
</dbReference>
<dbReference type="GeneID" id="4982"/>
<dbReference type="KEGG" id="hsa:4982"/>
<dbReference type="MANE-Select" id="ENST00000297350.9">
    <property type="protein sequence ID" value="ENSP00000297350.4"/>
    <property type="RefSeq nucleotide sequence ID" value="NM_002546.4"/>
    <property type="RefSeq protein sequence ID" value="NP_002537.3"/>
</dbReference>
<dbReference type="UCSC" id="uc003yon.5">
    <property type="organism name" value="human"/>
</dbReference>
<dbReference type="AGR" id="HGNC:11909"/>
<dbReference type="CTD" id="4982"/>
<dbReference type="DisGeNET" id="4982"/>
<dbReference type="GeneCards" id="TNFRSF11B"/>
<dbReference type="HGNC" id="HGNC:11909">
    <property type="gene designation" value="TNFRSF11B"/>
</dbReference>
<dbReference type="HPA" id="ENSG00000164761">
    <property type="expression patterns" value="Group enriched (kidney, thyroid gland)"/>
</dbReference>
<dbReference type="MalaCards" id="TNFRSF11B"/>
<dbReference type="MIM" id="239000">
    <property type="type" value="phenotype"/>
</dbReference>
<dbReference type="MIM" id="602643">
    <property type="type" value="gene"/>
</dbReference>
<dbReference type="neXtProt" id="NX_O00300"/>
<dbReference type="OpenTargets" id="ENSG00000164761"/>
<dbReference type="Orphanet" id="1416">
    <property type="disease" value="Familial calcium pyrophosphate deposition"/>
</dbReference>
<dbReference type="Orphanet" id="2801">
    <property type="disease" value="Juvenile Paget disease"/>
</dbReference>
<dbReference type="PharmGKB" id="PA36602"/>
<dbReference type="VEuPathDB" id="HostDB:ENSG00000164761"/>
<dbReference type="eggNOG" id="ENOG502QVRT">
    <property type="taxonomic scope" value="Eukaryota"/>
</dbReference>
<dbReference type="GeneTree" id="ENSGT00940000155167"/>
<dbReference type="HOGENOM" id="CLU_057708_0_0_1"/>
<dbReference type="InParanoid" id="O00300"/>
<dbReference type="OMA" id="TICKRCP"/>
<dbReference type="OrthoDB" id="8710478at2759"/>
<dbReference type="PAN-GO" id="O00300">
    <property type="GO annotations" value="0 GO annotations based on evolutionary models"/>
</dbReference>
<dbReference type="PhylomeDB" id="O00300"/>
<dbReference type="TreeFam" id="TF331157"/>
<dbReference type="PathwayCommons" id="O00300"/>
<dbReference type="Reactome" id="R-HSA-5669034">
    <property type="pathway name" value="TNFs bind their physiological receptors"/>
</dbReference>
<dbReference type="SignaLink" id="O00300"/>
<dbReference type="SIGNOR" id="O00300"/>
<dbReference type="BioGRID-ORCS" id="4982">
    <property type="hits" value="11 hits in 1153 CRISPR screens"/>
</dbReference>
<dbReference type="ChiTaRS" id="TNFRSF11B">
    <property type="organism name" value="human"/>
</dbReference>
<dbReference type="EvolutionaryTrace" id="O00300"/>
<dbReference type="GeneWiki" id="Osteoprotegerin"/>
<dbReference type="GenomeRNAi" id="4982"/>
<dbReference type="Pharos" id="O00300">
    <property type="development level" value="Tbio"/>
</dbReference>
<dbReference type="PRO" id="PR:O00300"/>
<dbReference type="Proteomes" id="UP000005640">
    <property type="component" value="Chromosome 8"/>
</dbReference>
<dbReference type="RNAct" id="O00300">
    <property type="molecule type" value="protein"/>
</dbReference>
<dbReference type="Bgee" id="ENSG00000164761">
    <property type="expression patterns" value="Expressed in cartilage tissue and 127 other cell types or tissues"/>
</dbReference>
<dbReference type="ExpressionAtlas" id="O00300">
    <property type="expression patterns" value="baseline and differential"/>
</dbReference>
<dbReference type="GO" id="GO:0031012">
    <property type="term" value="C:extracellular matrix"/>
    <property type="evidence" value="ECO:0007669"/>
    <property type="project" value="Ensembl"/>
</dbReference>
<dbReference type="GO" id="GO:0005576">
    <property type="term" value="C:extracellular region"/>
    <property type="evidence" value="ECO:0000304"/>
    <property type="project" value="ProtInc"/>
</dbReference>
<dbReference type="GO" id="GO:0005615">
    <property type="term" value="C:extracellular space"/>
    <property type="evidence" value="ECO:0000314"/>
    <property type="project" value="BHF-UCL"/>
</dbReference>
<dbReference type="GO" id="GO:0005886">
    <property type="term" value="C:plasma membrane"/>
    <property type="evidence" value="ECO:0000304"/>
    <property type="project" value="Reactome"/>
</dbReference>
<dbReference type="GO" id="GO:0043235">
    <property type="term" value="C:receptor complex"/>
    <property type="evidence" value="ECO:0000353"/>
    <property type="project" value="ComplexPortal"/>
</dbReference>
<dbReference type="GO" id="GO:0005125">
    <property type="term" value="F:cytokine activity"/>
    <property type="evidence" value="ECO:0000304"/>
    <property type="project" value="ProtInc"/>
</dbReference>
<dbReference type="GO" id="GO:1904399">
    <property type="term" value="F:heparan sulfate binding"/>
    <property type="evidence" value="ECO:0007669"/>
    <property type="project" value="Ensembl"/>
</dbReference>
<dbReference type="GO" id="GO:0038023">
    <property type="term" value="F:signaling receptor activity"/>
    <property type="evidence" value="ECO:0000304"/>
    <property type="project" value="ProtInc"/>
</dbReference>
<dbReference type="GO" id="GO:0006915">
    <property type="term" value="P:apoptotic process"/>
    <property type="evidence" value="ECO:0007669"/>
    <property type="project" value="UniProtKB-KW"/>
</dbReference>
<dbReference type="GO" id="GO:0030198">
    <property type="term" value="P:extracellular matrix organization"/>
    <property type="evidence" value="ECO:0007669"/>
    <property type="project" value="Ensembl"/>
</dbReference>
<dbReference type="GO" id="GO:0042489">
    <property type="term" value="P:negative regulation of odontogenesis of dentin-containing tooth"/>
    <property type="evidence" value="ECO:0007669"/>
    <property type="project" value="Ensembl"/>
</dbReference>
<dbReference type="GO" id="GO:0045671">
    <property type="term" value="P:negative regulation of osteoclast differentiation"/>
    <property type="evidence" value="ECO:0000266"/>
    <property type="project" value="ComplexPortal"/>
</dbReference>
<dbReference type="GO" id="GO:0010804">
    <property type="term" value="P:negative regulation of tumor necrosis factor-mediated signaling pathway"/>
    <property type="evidence" value="ECO:0007669"/>
    <property type="project" value="Ensembl"/>
</dbReference>
<dbReference type="GO" id="GO:0007165">
    <property type="term" value="P:signal transduction"/>
    <property type="evidence" value="ECO:0000304"/>
    <property type="project" value="ProtInc"/>
</dbReference>
<dbReference type="GO" id="GO:0001501">
    <property type="term" value="P:skeletal system development"/>
    <property type="evidence" value="ECO:0000304"/>
    <property type="project" value="ProtInc"/>
</dbReference>
<dbReference type="CDD" id="cd01670">
    <property type="entry name" value="Death"/>
    <property type="match status" value="1"/>
</dbReference>
<dbReference type="CDD" id="cd10581">
    <property type="entry name" value="TNFRSF11B"/>
    <property type="match status" value="1"/>
</dbReference>
<dbReference type="FunFam" id="1.10.533.10:FF:000066">
    <property type="entry name" value="Tumor necrosis factor receptor superfamily member 11B"/>
    <property type="match status" value="1"/>
</dbReference>
<dbReference type="FunFam" id="2.10.50.10:FF:000014">
    <property type="entry name" value="Tumor necrosis factor receptor superfamily member 11B"/>
    <property type="match status" value="1"/>
</dbReference>
<dbReference type="FunFam" id="2.10.50.10:FF:000030">
    <property type="entry name" value="Tumor necrosis factor receptor superfamily member 11B"/>
    <property type="match status" value="1"/>
</dbReference>
<dbReference type="Gene3D" id="1.10.533.10">
    <property type="entry name" value="Death Domain, Fas"/>
    <property type="match status" value="1"/>
</dbReference>
<dbReference type="Gene3D" id="2.10.50.10">
    <property type="entry name" value="Tumor Necrosis Factor Receptor, subunit A, domain 2"/>
    <property type="match status" value="2"/>
</dbReference>
<dbReference type="InterPro" id="IPR011029">
    <property type="entry name" value="DEATH-like_dom_sf"/>
</dbReference>
<dbReference type="InterPro" id="IPR000488">
    <property type="entry name" value="Death_dom"/>
</dbReference>
<dbReference type="InterPro" id="IPR001368">
    <property type="entry name" value="TNFR/NGFR_Cys_rich_reg"/>
</dbReference>
<dbReference type="InterPro" id="IPR022323">
    <property type="entry name" value="TNFR_11"/>
</dbReference>
<dbReference type="InterPro" id="IPR017371">
    <property type="entry name" value="TNFR_11B"/>
</dbReference>
<dbReference type="InterPro" id="IPR052459">
    <property type="entry name" value="TNFRSF_decoy_receptor"/>
</dbReference>
<dbReference type="PANTHER" id="PTHR23097">
    <property type="entry name" value="TUMOR NECROSIS FACTOR RECEPTOR SUPERFAMILY MEMBER"/>
    <property type="match status" value="1"/>
</dbReference>
<dbReference type="PANTHER" id="PTHR23097:SF90">
    <property type="entry name" value="TUMOR NECROSIS FACTOR RECEPTOR SUPERFAMILY MEMBER 11B"/>
    <property type="match status" value="1"/>
</dbReference>
<dbReference type="Pfam" id="PF23630">
    <property type="entry name" value="Death_TNFRSF11B"/>
    <property type="match status" value="2"/>
</dbReference>
<dbReference type="Pfam" id="PF00020">
    <property type="entry name" value="TNFR_c6"/>
    <property type="match status" value="4"/>
</dbReference>
<dbReference type="PIRSF" id="PIRSF038065">
    <property type="entry name" value="TNFR_11B"/>
    <property type="match status" value="1"/>
</dbReference>
<dbReference type="PRINTS" id="PR01961">
    <property type="entry name" value="TNFACTORR11"/>
</dbReference>
<dbReference type="PRINTS" id="PR01975">
    <property type="entry name" value="TNFACTORR11B"/>
</dbReference>
<dbReference type="SMART" id="SM00005">
    <property type="entry name" value="DEATH"/>
    <property type="match status" value="1"/>
</dbReference>
<dbReference type="SMART" id="SM01411">
    <property type="entry name" value="Ephrin_rec_like"/>
    <property type="match status" value="2"/>
</dbReference>
<dbReference type="SMART" id="SM00208">
    <property type="entry name" value="TNFR"/>
    <property type="match status" value="4"/>
</dbReference>
<dbReference type="SUPFAM" id="SSF47986">
    <property type="entry name" value="DEATH domain"/>
    <property type="match status" value="2"/>
</dbReference>
<dbReference type="SUPFAM" id="SSF57586">
    <property type="entry name" value="TNF receptor-like"/>
    <property type="match status" value="2"/>
</dbReference>
<dbReference type="PROSITE" id="PS00652">
    <property type="entry name" value="TNFR_NGFR_1"/>
    <property type="match status" value="1"/>
</dbReference>
<dbReference type="PROSITE" id="PS50050">
    <property type="entry name" value="TNFR_NGFR_2"/>
    <property type="match status" value="2"/>
</dbReference>
<accession>O00300</accession>
<accession>B2R9A8</accession>
<accession>O60236</accession>
<accession>Q53FX6</accession>
<accession>Q9UHP4</accession>
<comment type="function">
    <text evidence="6 8">Acts as a decoy receptor for TNFSF11/RANKL and thereby neutralizes its function in osteoclastogenesis. Inhibits the activation of osteoclasts and promotes osteoclast apoptosis in vitro. Bone homeostasis seems to depend on the local ratio between TNFSF11 and TNFRSF11B. May also play a role in preventing arterial calcification. May act as decoy receptor for TNFSF10/TRAIL and protect against apoptosis. TNFSF10/TRAIL binding blocks the inhibition of osteoclastogenesis.</text>
</comment>
<comment type="subunit">
    <text evidence="6 12">Homodimer. Interacts with TNFSF10 and TNFSF11.</text>
</comment>
<comment type="interaction">
    <interactant intactId="EBI-15481185">
        <id>O00300</id>
    </interactant>
    <interactant intactId="EBI-466029">
        <id>P42858</id>
        <label>HTT</label>
    </interactant>
    <organismsDiffer>false</organismsDiffer>
    <experiments>3</experiments>
</comment>
<comment type="interaction">
    <interactant intactId="EBI-15481185">
        <id>O00300</id>
    </interactant>
    <interactant intactId="EBI-11047108">
        <id>P49768-2</id>
        <label>PSEN1</label>
    </interactant>
    <organismsDiffer>false</organismsDiffer>
    <experiments>3</experiments>
</comment>
<comment type="interaction">
    <interactant intactId="EBI-15481185">
        <id>O00300</id>
    </interactant>
    <interactant intactId="EBI-7404021">
        <id>O14788</id>
        <label>TNFSF11</label>
    </interactant>
    <organismsDiffer>false</organismsDiffer>
    <experiments>3</experiments>
</comment>
<comment type="subcellular location">
    <subcellularLocation>
        <location>Secreted</location>
    </subcellularLocation>
</comment>
<comment type="tissue specificity">
    <text>Highly expressed in adult lung, heart, kidney, liver, spleen, thymus, prostate, ovary, small intestine, thyroid, lymph node, trachea, adrenal gland, testis, and bone marrow. Detected at very low levels in brain, placenta and skeletal muscle. Highly expressed in fetal kidney, liver and lung.</text>
</comment>
<comment type="induction">
    <text>Up-regulated by increasing calcium-concentration in the medium and estrogens. Down-regulated by glucocorticoids.</text>
</comment>
<comment type="PTM">
    <text evidence="6">N-glycosylated. Contains sialic acid residues.</text>
</comment>
<comment type="PTM">
    <text>The N-terminus is blocked.</text>
</comment>
<comment type="disease" evidence="3">
    <disease id="DI-01852">
        <name>Paget disease of bone 5, juvenile-onset</name>
        <acronym>PDB5</acronym>
        <description>An autosomal recessive, juvenile-onset form of Paget disease, a disorder of bone remodeling characterized by increased bone turnover affecting one or more sites throughout the skeleton, primarily the axial skeleton. Osteoclastic overactivity followed by compensatory osteoblastic activity leads to a structurally disorganized mosaic of bone (woven bone), which is mechanically weaker, larger, less compact, more vascular, and more susceptible to fracture than normal adult lamellar bone. PDB5 clinical manifestations include short stature, progressive long bone deformities, fractures, vertebral collapse, skull enlargement, and hyperostosis with progressive deafness.</description>
        <dbReference type="MIM" id="239000"/>
    </disease>
    <text>The disease is caused by variants affecting the gene represented in this entry.</text>
</comment>
<comment type="online information" name="Atlas of Genetics and Cytogenetics in Oncology and Haematology">
    <link uri="https://atlasgeneticsoncology.org/gene/42610/TNFRSF11B"/>
</comment>
<evidence type="ECO:0000255" key="1"/>
<evidence type="ECO:0000255" key="2">
    <source>
        <dbReference type="PROSITE-ProRule" id="PRU00206"/>
    </source>
</evidence>
<evidence type="ECO:0000269" key="3">
    <source>
    </source>
</evidence>
<evidence type="ECO:0000269" key="4">
    <source>
    </source>
</evidence>
<evidence type="ECO:0000269" key="5">
    <source>
    </source>
</evidence>
<evidence type="ECO:0000269" key="6">
    <source>
    </source>
</evidence>
<evidence type="ECO:0000269" key="7">
    <source>
    </source>
</evidence>
<evidence type="ECO:0000269" key="8">
    <source>
    </source>
</evidence>
<evidence type="ECO:0000269" key="9">
    <source>
    </source>
</evidence>
<evidence type="ECO:0000269" key="10">
    <source>
    </source>
</evidence>
<evidence type="ECO:0000269" key="11">
    <source>
    </source>
</evidence>
<evidence type="ECO:0000269" key="12">
    <source>
    </source>
</evidence>
<evidence type="ECO:0000269" key="13">
    <source>
    </source>
</evidence>
<evidence type="ECO:0000269" key="14">
    <source ref="6"/>
</evidence>
<evidence type="ECO:0000305" key="15"/>
<evidence type="ECO:0007829" key="16">
    <source>
        <dbReference type="PDB" id="3URF"/>
    </source>
</evidence>
<sequence>MNNLLCCALVFLDISIKWTTQETFPPKYLHYDEETSHQLLCDKCPPGTYLKQHCTAKWKTVCAPCPDHYYTDSWHTSDECLYCSPVCKELQYVKQECNRTHNRVCECKEGRYLEIEFCLKHRSCPPGFGVVQAGTPERNTVCKRCPDGFFSNETSSKAPCRKHTNCSVFGLLLTQKGNATHDNICSGNSESTQKCGIDVTLCEEAFFRFAVPTKFTPNWLSVLVDNLPGTKVNAESVERIKRQHSSQEQTFQLLKLWKHQNKDQDIVKKIIQDIDLCENSVQRHIGHANLTFEQLRSLMESLPGKKVGAEDIEKTIKACKPSDQILKLLSLWRIKNGDQDTLKGLMHALKHSKTYHFPKTVTQSLKKTIRFLHSFTMYKLYQKLFLEMIGNQVQSVKISCL</sequence>
<reference key="1">
    <citation type="journal article" date="1997" name="Cell">
        <title>Osteoprotegerin: a novel secreted protein involved in the regulation of bone density.</title>
        <authorList>
            <person name="Simonet W.S."/>
            <person name="Lacey D.L."/>
            <person name="Dunstan C.R."/>
            <person name="Kelley M."/>
            <person name="Chang M.-S."/>
            <person name="Luethy R."/>
            <person name="Nguyen H.Q."/>
            <person name="Wooden S."/>
            <person name="Bennett L."/>
            <person name="Boone T."/>
            <person name="Shimamoto G."/>
            <person name="Derose M."/>
            <person name="Elliott R."/>
            <person name="Colombero A."/>
            <person name="Tan H.-L."/>
            <person name="Trail G."/>
            <person name="Sullivan J."/>
            <person name="Davy E."/>
            <person name="Bucay N."/>
            <person name="Renshaw-Gegg L."/>
            <person name="Hughes T.M."/>
            <person name="Hill D."/>
            <person name="Pattison W."/>
            <person name="Campbell P."/>
            <person name="Sander S."/>
            <person name="Van G."/>
            <person name="Tarpley J."/>
            <person name="Derby P."/>
            <person name="Lee R."/>
            <person name="Suggs S."/>
            <person name="Boyle W.J."/>
        </authorList>
    </citation>
    <scope>NUCLEOTIDE SEQUENCE [MRNA]</scope>
    <scope>VARIANT LYS-3</scope>
    <source>
        <tissue>Kidney</tissue>
    </source>
</reference>
<reference key="2">
    <citation type="journal article" date="1998" name="Endocrinology">
        <title>Identity of osteoclastogenesis inhibitory factor (OCIF) and osteoprotegerin (OPG): a mechanism by which OPG/OCIF inhibits osteoclastogenesis in vitro.</title>
        <authorList>
            <person name="Yasuda H."/>
            <person name="Shima N."/>
            <person name="Nakagawa N."/>
            <person name="Mochizuki S."/>
            <person name="Yano K."/>
            <person name="Fujise N."/>
            <person name="Sato Y."/>
            <person name="Goto M."/>
            <person name="Yamaguchi K."/>
            <person name="Kuriyama M."/>
            <person name="Kanno T."/>
            <person name="Murakami A."/>
            <person name="Tsuda E."/>
            <person name="Morinaga T."/>
            <person name="Higashio K."/>
        </authorList>
    </citation>
    <scope>NUCLEOTIDE SEQUENCE [MRNA]</scope>
    <scope>VARIANT LYS-3</scope>
    <source>
        <tissue>Lung cancer</tissue>
    </source>
</reference>
<reference key="3">
    <citation type="journal article" date="1998" name="Eur. J. Biochem.">
        <title>Cloning and characterization of the gene encoding human osteoprotegerin/osteoclastogenesis-inhibitory factor.</title>
        <authorList>
            <person name="Morinaga T."/>
            <person name="Nakagawa N."/>
            <person name="Yasuda H."/>
            <person name="Tsuda E."/>
            <person name="Higashio K."/>
        </authorList>
    </citation>
    <scope>NUCLEOTIDE SEQUENCE [GENOMIC DNA]</scope>
    <scope>VARIANT LYS-3</scope>
    <source>
        <tissue>Placenta</tissue>
    </source>
</reference>
<reference key="4">
    <citation type="journal article" date="2004" name="Nat. Genet.">
        <title>Complete sequencing and characterization of 21,243 full-length human cDNAs.</title>
        <authorList>
            <person name="Ota T."/>
            <person name="Suzuki Y."/>
            <person name="Nishikawa T."/>
            <person name="Otsuki T."/>
            <person name="Sugiyama T."/>
            <person name="Irie R."/>
            <person name="Wakamatsu A."/>
            <person name="Hayashi K."/>
            <person name="Sato H."/>
            <person name="Nagai K."/>
            <person name="Kimura K."/>
            <person name="Makita H."/>
            <person name="Sekine M."/>
            <person name="Obayashi M."/>
            <person name="Nishi T."/>
            <person name="Shibahara T."/>
            <person name="Tanaka T."/>
            <person name="Ishii S."/>
            <person name="Yamamoto J."/>
            <person name="Saito K."/>
            <person name="Kawai Y."/>
            <person name="Isono Y."/>
            <person name="Nakamura Y."/>
            <person name="Nagahari K."/>
            <person name="Murakami K."/>
            <person name="Yasuda T."/>
            <person name="Iwayanagi T."/>
            <person name="Wagatsuma M."/>
            <person name="Shiratori A."/>
            <person name="Sudo H."/>
            <person name="Hosoiri T."/>
            <person name="Kaku Y."/>
            <person name="Kodaira H."/>
            <person name="Kondo H."/>
            <person name="Sugawara M."/>
            <person name="Takahashi M."/>
            <person name="Kanda K."/>
            <person name="Yokoi T."/>
            <person name="Furuya T."/>
            <person name="Kikkawa E."/>
            <person name="Omura Y."/>
            <person name="Abe K."/>
            <person name="Kamihara K."/>
            <person name="Katsuta N."/>
            <person name="Sato K."/>
            <person name="Tanikawa M."/>
            <person name="Yamazaki M."/>
            <person name="Ninomiya K."/>
            <person name="Ishibashi T."/>
            <person name="Yamashita H."/>
            <person name="Murakawa K."/>
            <person name="Fujimori K."/>
            <person name="Tanai H."/>
            <person name="Kimata M."/>
            <person name="Watanabe M."/>
            <person name="Hiraoka S."/>
            <person name="Chiba Y."/>
            <person name="Ishida S."/>
            <person name="Ono Y."/>
            <person name="Takiguchi S."/>
            <person name="Watanabe S."/>
            <person name="Yosida M."/>
            <person name="Hotuta T."/>
            <person name="Kusano J."/>
            <person name="Kanehori K."/>
            <person name="Takahashi-Fujii A."/>
            <person name="Hara H."/>
            <person name="Tanase T.-O."/>
            <person name="Nomura Y."/>
            <person name="Togiya S."/>
            <person name="Komai F."/>
            <person name="Hara R."/>
            <person name="Takeuchi K."/>
            <person name="Arita M."/>
            <person name="Imose N."/>
            <person name="Musashino K."/>
            <person name="Yuuki H."/>
            <person name="Oshima A."/>
            <person name="Sasaki N."/>
            <person name="Aotsuka S."/>
            <person name="Yoshikawa Y."/>
            <person name="Matsunawa H."/>
            <person name="Ichihara T."/>
            <person name="Shiohata N."/>
            <person name="Sano S."/>
            <person name="Moriya S."/>
            <person name="Momiyama H."/>
            <person name="Satoh N."/>
            <person name="Takami S."/>
            <person name="Terashima Y."/>
            <person name="Suzuki O."/>
            <person name="Nakagawa S."/>
            <person name="Senoh A."/>
            <person name="Mizoguchi H."/>
            <person name="Goto Y."/>
            <person name="Shimizu F."/>
            <person name="Wakebe H."/>
            <person name="Hishigaki H."/>
            <person name="Watanabe T."/>
            <person name="Sugiyama A."/>
            <person name="Takemoto M."/>
            <person name="Kawakami B."/>
            <person name="Yamazaki M."/>
            <person name="Watanabe K."/>
            <person name="Kumagai A."/>
            <person name="Itakura S."/>
            <person name="Fukuzumi Y."/>
            <person name="Fujimori Y."/>
            <person name="Komiyama M."/>
            <person name="Tashiro H."/>
            <person name="Tanigami A."/>
            <person name="Fujiwara T."/>
            <person name="Ono T."/>
            <person name="Yamada K."/>
            <person name="Fujii Y."/>
            <person name="Ozaki K."/>
            <person name="Hirao M."/>
            <person name="Ohmori Y."/>
            <person name="Kawabata A."/>
            <person name="Hikiji T."/>
            <person name="Kobatake N."/>
            <person name="Inagaki H."/>
            <person name="Ikema Y."/>
            <person name="Okamoto S."/>
            <person name="Okitani R."/>
            <person name="Kawakami T."/>
            <person name="Noguchi S."/>
            <person name="Itoh T."/>
            <person name="Shigeta K."/>
            <person name="Senba T."/>
            <person name="Matsumura K."/>
            <person name="Nakajima Y."/>
            <person name="Mizuno T."/>
            <person name="Morinaga M."/>
            <person name="Sasaki M."/>
            <person name="Togashi T."/>
            <person name="Oyama M."/>
            <person name="Hata H."/>
            <person name="Watanabe M."/>
            <person name="Komatsu T."/>
            <person name="Mizushima-Sugano J."/>
            <person name="Satoh T."/>
            <person name="Shirai Y."/>
            <person name="Takahashi Y."/>
            <person name="Nakagawa K."/>
            <person name="Okumura K."/>
            <person name="Nagase T."/>
            <person name="Nomura N."/>
            <person name="Kikuchi H."/>
            <person name="Masuho Y."/>
            <person name="Yamashita R."/>
            <person name="Nakai K."/>
            <person name="Yada T."/>
            <person name="Nakamura Y."/>
            <person name="Ohara O."/>
            <person name="Isogai T."/>
            <person name="Sugano S."/>
        </authorList>
    </citation>
    <scope>NUCLEOTIDE SEQUENCE [LARGE SCALE MRNA]</scope>
    <scope>VARIANT LYS-3</scope>
    <source>
        <tissue>Kidney</tissue>
    </source>
</reference>
<reference key="5">
    <citation type="submission" date="2005-04" db="EMBL/GenBank/DDBJ databases">
        <authorList>
            <person name="Suzuki Y."/>
            <person name="Sugano S."/>
            <person name="Totoki Y."/>
            <person name="Toyoda A."/>
            <person name="Takeda T."/>
            <person name="Sakaki Y."/>
            <person name="Tanaka A."/>
            <person name="Yokoyama S."/>
        </authorList>
    </citation>
    <scope>NUCLEOTIDE SEQUENCE [LARGE SCALE MRNA]</scope>
    <source>
        <tissue>Lung</tissue>
    </source>
</reference>
<reference key="6">
    <citation type="submission" date="2003-11" db="EMBL/GenBank/DDBJ databases">
        <authorList>
            <consortium name="NIEHS SNPs program"/>
        </authorList>
    </citation>
    <scope>NUCLEOTIDE SEQUENCE [GENOMIC DNA]</scope>
    <scope>VARIANTS LYS-3 AND MET-104</scope>
</reference>
<reference key="7">
    <citation type="journal article" date="2006" name="Nature">
        <title>DNA sequence and analysis of human chromosome 8.</title>
        <authorList>
            <person name="Nusbaum C."/>
            <person name="Mikkelsen T.S."/>
            <person name="Zody M.C."/>
            <person name="Asakawa S."/>
            <person name="Taudien S."/>
            <person name="Garber M."/>
            <person name="Kodira C.D."/>
            <person name="Schueler M.G."/>
            <person name="Shimizu A."/>
            <person name="Whittaker C.A."/>
            <person name="Chang J.L."/>
            <person name="Cuomo C.A."/>
            <person name="Dewar K."/>
            <person name="FitzGerald M.G."/>
            <person name="Yang X."/>
            <person name="Allen N.R."/>
            <person name="Anderson S."/>
            <person name="Asakawa T."/>
            <person name="Blechschmidt K."/>
            <person name="Bloom T."/>
            <person name="Borowsky M.L."/>
            <person name="Butler J."/>
            <person name="Cook A."/>
            <person name="Corum B."/>
            <person name="DeArellano K."/>
            <person name="DeCaprio D."/>
            <person name="Dooley K.T."/>
            <person name="Dorris L. III"/>
            <person name="Engels R."/>
            <person name="Gloeckner G."/>
            <person name="Hafez N."/>
            <person name="Hagopian D.S."/>
            <person name="Hall J.L."/>
            <person name="Ishikawa S.K."/>
            <person name="Jaffe D.B."/>
            <person name="Kamat A."/>
            <person name="Kudoh J."/>
            <person name="Lehmann R."/>
            <person name="Lokitsang T."/>
            <person name="Macdonald P."/>
            <person name="Major J.E."/>
            <person name="Matthews C.D."/>
            <person name="Mauceli E."/>
            <person name="Menzel U."/>
            <person name="Mihalev A.H."/>
            <person name="Minoshima S."/>
            <person name="Murayama Y."/>
            <person name="Naylor J.W."/>
            <person name="Nicol R."/>
            <person name="Nguyen C."/>
            <person name="O'Leary S.B."/>
            <person name="O'Neill K."/>
            <person name="Parker S.C.J."/>
            <person name="Polley A."/>
            <person name="Raymond C.K."/>
            <person name="Reichwald K."/>
            <person name="Rodriguez J."/>
            <person name="Sasaki T."/>
            <person name="Schilhabel M."/>
            <person name="Siddiqui R."/>
            <person name="Smith C.L."/>
            <person name="Sneddon T.P."/>
            <person name="Talamas J.A."/>
            <person name="Tenzin P."/>
            <person name="Topham K."/>
            <person name="Venkataraman V."/>
            <person name="Wen G."/>
            <person name="Yamazaki S."/>
            <person name="Young S.K."/>
            <person name="Zeng Q."/>
            <person name="Zimmer A.R."/>
            <person name="Rosenthal A."/>
            <person name="Birren B.W."/>
            <person name="Platzer M."/>
            <person name="Shimizu N."/>
            <person name="Lander E.S."/>
        </authorList>
    </citation>
    <scope>NUCLEOTIDE SEQUENCE [LARGE SCALE GENOMIC DNA]</scope>
</reference>
<reference key="8">
    <citation type="journal article" date="2004" name="Genome Res.">
        <title>The status, quality, and expansion of the NIH full-length cDNA project: the Mammalian Gene Collection (MGC).</title>
        <authorList>
            <consortium name="The MGC Project Team"/>
        </authorList>
    </citation>
    <scope>NUCLEOTIDE SEQUENCE [LARGE SCALE MRNA]</scope>
    <source>
        <tissue>Eye</tissue>
    </source>
</reference>
<reference key="9">
    <citation type="journal article" date="1998" name="Biochem. Biophys. Res. Commun.">
        <title>Characterization of monomeric and homodimeric forms of osteoclastogenesis inhibitory factor.</title>
        <authorList>
            <person name="Tomoyasu A."/>
            <person name="Goto M."/>
            <person name="Fujise N."/>
            <person name="Mochizuki S."/>
            <person name="Yasuda H."/>
            <person name="Morinaga T."/>
            <person name="Tsuda E."/>
            <person name="Higashio K."/>
        </authorList>
    </citation>
    <scope>PROTEIN SEQUENCE OF 22-36 AND 378-401</scope>
</reference>
<reference key="10">
    <citation type="journal article" date="2004" name="Protein Sci.">
        <title>Signal peptide prediction based on analysis of experimentally verified cleavage sites.</title>
        <authorList>
            <person name="Zhang Z."/>
            <person name="Henzel W.J."/>
        </authorList>
    </citation>
    <scope>PROTEIN SEQUENCE OF 22-36</scope>
</reference>
<reference key="11">
    <citation type="journal article" date="1999" name="Sheng Wu Hua Xue Yu Sheng Wu Wu Li Xue Bao">
        <title>Cloning and expression of a novel mutated osteoprogerin/osteoclastogenesis inhibitory factor gene.</title>
        <authorList>
            <person name="He Z.-Y."/>
            <person name="Yang G.-Z."/>
            <person name="Zhang W.-J."/>
            <person name="Wu X.-F."/>
        </authorList>
    </citation>
    <scope>NUCLEOTIDE SEQUENCE [MRNA] OF 22-393</scope>
    <source>
        <tissue>Placenta</tissue>
    </source>
</reference>
<reference key="12">
    <citation type="journal article" date="1997" name="Biochem. Biophys. Res. Commun.">
        <title>Isolation of a novel cytokine from human fibroblasts that specifically inhibits osteoclastogenesis.</title>
        <authorList>
            <person name="Tsuda E."/>
            <person name="Goto M."/>
            <person name="Mochizuki S."/>
            <person name="Yano K."/>
            <person name="Kobayashi F."/>
            <person name="Morinaga T."/>
            <person name="Higashio K."/>
        </authorList>
    </citation>
    <scope>PROTEIN SEQUENCE OF 242-255; 354-359 AND 369-378</scope>
    <scope>FUNCTION</scope>
</reference>
<reference key="13">
    <citation type="journal article" date="1998" name="J. Biol. Chem.">
        <title>Osteoprotegerin is a receptor for the cytotoxic ligand TRAIL.</title>
        <authorList>
            <person name="Emery J.G."/>
            <person name="McDonnell P."/>
            <person name="Burke M.B."/>
            <person name="Deen K.C."/>
            <person name="Lyn S."/>
            <person name="Silverman C."/>
            <person name="Dul E."/>
            <person name="Appelbaum E.R."/>
            <person name="Eichman C."/>
            <person name="DiPrinzio R."/>
            <person name="Dodds R.A."/>
            <person name="James I.E."/>
            <person name="Rosenberg M."/>
            <person name="Lee J.C."/>
            <person name="Young P.R."/>
        </authorList>
    </citation>
    <scope>INTERACTION WITH TNFSF10</scope>
</reference>
<reference key="14">
    <citation type="journal article" date="1998" name="J. Biol. Chem.">
        <title>Characterization of structural domains of human osteoclastogenesis inhibitory factor.</title>
        <authorList>
            <person name="Yamaguchi K."/>
            <person name="Kinosaki M."/>
            <person name="Goto M."/>
            <person name="Kobayashi F."/>
            <person name="Tsuda E."/>
            <person name="Morinaga T."/>
            <person name="Higashio K."/>
        </authorList>
    </citation>
    <scope>CHARACTERIZATION</scope>
    <scope>MUTAGENESIS OF CYS-400</scope>
</reference>
<reference key="15">
    <citation type="journal article" date="2001" name="Cancer">
        <title>Receptor activator of nuclear factor-kappaB ligand and osteoprotegerin: potential implications for the pathogenesis and treatment of malignant bone diseases.</title>
        <authorList>
            <person name="Hofbauer L.C."/>
            <person name="Neubauer A."/>
            <person name="Heufelder A.E."/>
        </authorList>
    </citation>
    <scope>REVIEW</scope>
</reference>
<reference key="16">
    <citation type="journal article" date="2012" name="J. Immunol.">
        <title>Crystal structure of human RANKL complexed with its decoy receptor osteoprotegerin.</title>
        <authorList>
            <person name="Luan X."/>
            <person name="Lu Q."/>
            <person name="Jiang Y."/>
            <person name="Zhang S."/>
            <person name="Wang Q."/>
            <person name="Yuan H."/>
            <person name="Zhao W."/>
            <person name="Wang J."/>
            <person name="Wang X."/>
        </authorList>
    </citation>
    <scope>X-RAY CRYSTALLOGRAPHY (2.7 ANGSTROMS) OF 22-186 IN COMPLEX WITH TNFSF11</scope>
    <scope>INTERACTION WITH TNFSF11</scope>
    <scope>SUBUNIT</scope>
    <scope>FUNCTION</scope>
    <scope>MUTAGENESIS OF 78-ASP-GLU-79 AND GLU-116</scope>
    <scope>GLYCOSYLATION AT ASN-178</scope>
    <scope>DISULFIDE BONDS</scope>
</reference>
<reference key="17">
    <citation type="journal article" date="2002" name="Hum. Mol. Genet.">
        <title>A mutation in the gene TNFRSF11B encoding osteoprotegerin causes an idiopathic hyperphosphatasia phenotype.</title>
        <authorList>
            <person name="Cundy T."/>
            <person name="Hegde M."/>
            <person name="Naot D."/>
            <person name="Chong B."/>
            <person name="King A."/>
            <person name="Wallace R."/>
            <person name="Mulley J."/>
            <person name="Love D.R."/>
            <person name="Seidel J."/>
            <person name="Fawkner M."/>
            <person name="Banovic T."/>
            <person name="Callon K.E."/>
            <person name="Grey A.B."/>
            <person name="Reid I.R."/>
            <person name="Middleton-Hardie C.A."/>
            <person name="Cornish J."/>
        </authorList>
    </citation>
    <scope>VARIANT PDB5 ASP-182 DEL</scope>
</reference>
<proteinExistence type="evidence at protein level"/>
<keyword id="KW-0002">3D-structure</keyword>
<keyword id="KW-0053">Apoptosis</keyword>
<keyword id="KW-0903">Direct protein sequencing</keyword>
<keyword id="KW-0225">Disease variant</keyword>
<keyword id="KW-1015">Disulfide bond</keyword>
<keyword id="KW-0325">Glycoprotein</keyword>
<keyword id="KW-1267">Proteomics identification</keyword>
<keyword id="KW-0675">Receptor</keyword>
<keyword id="KW-1185">Reference proteome</keyword>
<keyword id="KW-0677">Repeat</keyword>
<keyword id="KW-0964">Secreted</keyword>
<keyword id="KW-0732">Signal</keyword>
<feature type="signal peptide" evidence="5 11">
    <location>
        <begin position="1"/>
        <end position="21"/>
    </location>
</feature>
<feature type="chain" id="PRO_0000034587" description="Tumor necrosis factor receptor superfamily member 11B">
    <location>
        <begin position="22"/>
        <end position="401"/>
    </location>
</feature>
<feature type="repeat" description="TNFR-Cys 1">
    <location>
        <begin position="24"/>
        <end position="62"/>
    </location>
</feature>
<feature type="repeat" description="TNFR-Cys 2">
    <location>
        <begin position="65"/>
        <end position="105"/>
    </location>
</feature>
<feature type="repeat" description="TNFR-Cys 3">
    <location>
        <begin position="107"/>
        <end position="142"/>
    </location>
</feature>
<feature type="repeat" description="TNFR-Cys 4">
    <location>
        <begin position="145"/>
        <end position="185"/>
    </location>
</feature>
<feature type="domain" description="Death 1">
    <location>
        <begin position="198"/>
        <end position="269"/>
    </location>
</feature>
<feature type="domain" description="Death 2">
    <location>
        <begin position="270"/>
        <end position="365"/>
    </location>
</feature>
<feature type="site" description="Involved in dimerization">
    <location>
        <position position="400"/>
    </location>
</feature>
<feature type="glycosylation site" description="N-linked (GlcNAc...) asparagine" evidence="1">
    <location>
        <position position="98"/>
    </location>
</feature>
<feature type="glycosylation site" description="N-linked (GlcNAc...) asparagine" evidence="1">
    <location>
        <position position="152"/>
    </location>
</feature>
<feature type="glycosylation site" description="N-linked (GlcNAc...) asparagine" evidence="1">
    <location>
        <position position="165"/>
    </location>
</feature>
<feature type="glycosylation site" description="N-linked (GlcNAc...) asparagine" evidence="6">
    <location>
        <position position="178"/>
    </location>
</feature>
<feature type="glycosylation site" description="N-linked (GlcNAc...) asparagine" evidence="1">
    <location>
        <position position="289"/>
    </location>
</feature>
<feature type="disulfide bond" evidence="2 6">
    <location>
        <begin position="41"/>
        <end position="54"/>
    </location>
</feature>
<feature type="disulfide bond" evidence="2 6">
    <location>
        <begin position="44"/>
        <end position="62"/>
    </location>
</feature>
<feature type="disulfide bond" evidence="2 6">
    <location>
        <begin position="65"/>
        <end position="80"/>
    </location>
</feature>
<feature type="disulfide bond" evidence="2 6">
    <location>
        <begin position="83"/>
        <end position="97"/>
    </location>
</feature>
<feature type="disulfide bond" evidence="2 6">
    <location>
        <begin position="87"/>
        <end position="105"/>
    </location>
</feature>
<feature type="disulfide bond" evidence="2 6">
    <location>
        <begin position="107"/>
        <end position="118"/>
    </location>
</feature>
<feature type="disulfide bond" evidence="2 6">
    <location>
        <begin position="124"/>
        <end position="142"/>
    </location>
</feature>
<feature type="disulfide bond" evidence="2 6">
    <location>
        <begin position="145"/>
        <end position="160"/>
    </location>
</feature>
<feature type="disulfide bond" evidence="2 6">
    <location>
        <begin position="166"/>
        <end position="185"/>
    </location>
</feature>
<feature type="sequence variant" id="VAR_013439" description="In dbSNP:rs2073618." evidence="4 7 10 13 14">
    <original>N</original>
    <variation>K</variation>
    <location>
        <position position="3"/>
    </location>
</feature>
<feature type="sequence variant" id="VAR_018957" description="In dbSNP:rs11573906." evidence="14">
    <original>V</original>
    <variation>M</variation>
    <location>
        <position position="104"/>
    </location>
</feature>
<feature type="sequence variant" id="VAR_019413" description="In PDB5; dbSNP:rs796051868." evidence="3">
    <location>
        <position position="182"/>
    </location>
</feature>
<feature type="mutagenesis site" description="Decreases inhibition of osteoclast differentiation." evidence="6">
    <original>DE</original>
    <variation>AA</variation>
    <location>
        <begin position="78"/>
        <end position="79"/>
    </location>
</feature>
<feature type="mutagenesis site" description="Reduces affinity for TNFSF11. Decreases inhibition of osteoclast differentiation." evidence="6">
    <original>E</original>
    <variation>A</variation>
    <location>
        <position position="116"/>
    </location>
</feature>
<feature type="mutagenesis site" description="Abolishes dimerization.">
    <location>
        <begin position="400"/>
        <end position="401"/>
    </location>
</feature>
<feature type="mutagenesis site" description="Abolishes dimerization." evidence="9">
    <original>C</original>
    <variation>S</variation>
    <location>
        <position position="400"/>
    </location>
</feature>
<feature type="sequence conflict" description="In Ref. 1; AAB53709." evidence="15" ref="1">
    <original>D</original>
    <variation>A</variation>
    <location>
        <position position="263"/>
    </location>
</feature>
<feature type="strand" evidence="16">
    <location>
        <begin position="29"/>
        <end position="31"/>
    </location>
</feature>
<feature type="strand" evidence="16">
    <location>
        <begin position="35"/>
        <end position="37"/>
    </location>
</feature>
<feature type="strand" evidence="16">
    <location>
        <begin position="40"/>
        <end position="42"/>
    </location>
</feature>
<feature type="strand" evidence="16">
    <location>
        <begin position="48"/>
        <end position="52"/>
    </location>
</feature>
<feature type="strand" evidence="16">
    <location>
        <begin position="56"/>
        <end position="58"/>
    </location>
</feature>
<feature type="strand" evidence="16">
    <location>
        <begin position="61"/>
        <end position="64"/>
    </location>
</feature>
<feature type="strand" evidence="16">
    <location>
        <begin position="91"/>
        <end position="95"/>
    </location>
</feature>
<feature type="strand" evidence="16">
    <location>
        <begin position="99"/>
        <end position="101"/>
    </location>
</feature>
<feature type="strand" evidence="16">
    <location>
        <begin position="104"/>
        <end position="107"/>
    </location>
</feature>
<feature type="strand" evidence="16">
    <location>
        <begin position="111"/>
        <end position="114"/>
    </location>
</feature>
<feature type="strand" evidence="16">
    <location>
        <begin position="117"/>
        <end position="120"/>
    </location>
</feature>
<feature type="strand" evidence="16">
    <location>
        <begin position="128"/>
        <end position="132"/>
    </location>
</feature>
<feature type="strand" evidence="16">
    <location>
        <begin position="136"/>
        <end position="138"/>
    </location>
</feature>
<feature type="strand" evidence="16">
    <location>
        <begin position="141"/>
        <end position="144"/>
    </location>
</feature>
<feature type="strand" evidence="16">
    <location>
        <begin position="155"/>
        <end position="157"/>
    </location>
</feature>
<feature type="strand" evidence="16">
    <location>
        <begin position="167"/>
        <end position="171"/>
    </location>
</feature>